<name>DNAK_CHLCH</name>
<organism>
    <name type="scientific">Chlorobium chlorochromatii (strain CaD3)</name>
    <dbReference type="NCBI Taxonomy" id="340177"/>
    <lineage>
        <taxon>Bacteria</taxon>
        <taxon>Pseudomonadati</taxon>
        <taxon>Chlorobiota</taxon>
        <taxon>Chlorobiia</taxon>
        <taxon>Chlorobiales</taxon>
        <taxon>Chlorobiaceae</taxon>
        <taxon>Chlorobium/Pelodictyon group</taxon>
        <taxon>Chlorobium</taxon>
    </lineage>
</organism>
<reference key="1">
    <citation type="submission" date="2005-08" db="EMBL/GenBank/DDBJ databases">
        <title>Complete sequence of Chlorobium chlorochromatii CaD3.</title>
        <authorList>
            <consortium name="US DOE Joint Genome Institute"/>
            <person name="Copeland A."/>
            <person name="Lucas S."/>
            <person name="Lapidus A."/>
            <person name="Barry K."/>
            <person name="Detter J.C."/>
            <person name="Glavina T."/>
            <person name="Hammon N."/>
            <person name="Israni S."/>
            <person name="Pitluck S."/>
            <person name="Bryant D."/>
            <person name="Schmutz J."/>
            <person name="Larimer F."/>
            <person name="Land M."/>
            <person name="Kyrpides N."/>
            <person name="Ivanova N."/>
            <person name="Richardson P."/>
        </authorList>
    </citation>
    <scope>NUCLEOTIDE SEQUENCE [LARGE SCALE GENOMIC DNA]</scope>
    <source>
        <strain>CaD3</strain>
    </source>
</reference>
<protein>
    <recommendedName>
        <fullName evidence="1">Chaperone protein DnaK</fullName>
    </recommendedName>
    <alternativeName>
        <fullName evidence="1">HSP70</fullName>
    </alternativeName>
    <alternativeName>
        <fullName evidence="1">Heat shock 70 kDa protein</fullName>
    </alternativeName>
    <alternativeName>
        <fullName evidence="1">Heat shock protein 70</fullName>
    </alternativeName>
</protein>
<sequence>MGKIIGIDLGTTNSCVAVMQGSQPTVIENSEGNRTTPSVVGFTKTGDRLVGQAAKRQAITNPKNTIFSIKRFMGRRFDEVGEEKKMAPYELINDSGEARVKINDKVYSPQEISAMVLQKMKQTAEDFLGEKVTEAVITVPAYFNDAQRQATKDAGRIAGLEVKRIINEPTAAALAYGLDKKNASEKVAVFDLGGGTFDISILELGEGVFEVKSTDGDTHLGGDDFDQKIIDYIAEEFKKQEGIDLRKDAITLQRLKEAAEKAKIELSSRSDTEINLPFITATQEGPKHLVINLTRAKFEAISADLFNKVLDPCRRAVKNAKIEMREIDEVVLVGGSTRIPKIQALVKEFFGKEPNKSVNPDEVVAIGAAIQGGVLKGDVTDVLLLDVTPLSLGIETLGGVMTKLIEANTTIPTKKQEVFSTASDNQTSVEVHVLQGERPMAADNKTLGRFHLGDIPPAPRGIPQVEVIFDIDANGILHVSAKDKATGKEQSIRIEASSKLSDAEINKMKDDAKQHADEDKKRKEEIDIKNSADALIFSTEKQLTELGEKIPTDKKSALEGSLDKLRDAYKNGTTESIKSAMDDLNSQWNSIASDLYQSGAGAAQAQPEAPQNSGSSQSSGGDGAVNAEYEVINDDKK</sequence>
<proteinExistence type="inferred from homology"/>
<feature type="chain" id="PRO_0000225950" description="Chaperone protein DnaK">
    <location>
        <begin position="1"/>
        <end position="637"/>
    </location>
</feature>
<feature type="region of interest" description="Disordered" evidence="2">
    <location>
        <begin position="503"/>
        <end position="525"/>
    </location>
</feature>
<feature type="region of interest" description="Disordered" evidence="2">
    <location>
        <begin position="598"/>
        <end position="637"/>
    </location>
</feature>
<feature type="compositionally biased region" description="Low complexity" evidence="2">
    <location>
        <begin position="598"/>
        <end position="619"/>
    </location>
</feature>
<feature type="modified residue" description="Phosphothreonine; by autocatalysis" evidence="1">
    <location>
        <position position="196"/>
    </location>
</feature>
<evidence type="ECO:0000255" key="1">
    <source>
        <dbReference type="HAMAP-Rule" id="MF_00332"/>
    </source>
</evidence>
<evidence type="ECO:0000256" key="2">
    <source>
        <dbReference type="SAM" id="MobiDB-lite"/>
    </source>
</evidence>
<gene>
    <name evidence="1" type="primary">dnaK</name>
    <name type="ordered locus">Cag_1893</name>
</gene>
<keyword id="KW-0067">ATP-binding</keyword>
<keyword id="KW-0143">Chaperone</keyword>
<keyword id="KW-0547">Nucleotide-binding</keyword>
<keyword id="KW-0597">Phosphoprotein</keyword>
<keyword id="KW-0346">Stress response</keyword>
<accession>Q3APD2</accession>
<comment type="function">
    <text evidence="1">Acts as a chaperone.</text>
</comment>
<comment type="induction">
    <text evidence="1">By stress conditions e.g. heat shock.</text>
</comment>
<comment type="similarity">
    <text evidence="1">Belongs to the heat shock protein 70 family.</text>
</comment>
<dbReference type="EMBL" id="CP000108">
    <property type="protein sequence ID" value="ABB29143.1"/>
    <property type="molecule type" value="Genomic_DNA"/>
</dbReference>
<dbReference type="SMR" id="Q3APD2"/>
<dbReference type="STRING" id="340177.Cag_1893"/>
<dbReference type="KEGG" id="cch:Cag_1893"/>
<dbReference type="eggNOG" id="COG0443">
    <property type="taxonomic scope" value="Bacteria"/>
</dbReference>
<dbReference type="HOGENOM" id="CLU_005965_2_4_10"/>
<dbReference type="OrthoDB" id="9766019at2"/>
<dbReference type="GO" id="GO:0005524">
    <property type="term" value="F:ATP binding"/>
    <property type="evidence" value="ECO:0007669"/>
    <property type="project" value="UniProtKB-UniRule"/>
</dbReference>
<dbReference type="GO" id="GO:0140662">
    <property type="term" value="F:ATP-dependent protein folding chaperone"/>
    <property type="evidence" value="ECO:0007669"/>
    <property type="project" value="InterPro"/>
</dbReference>
<dbReference type="GO" id="GO:0051082">
    <property type="term" value="F:unfolded protein binding"/>
    <property type="evidence" value="ECO:0007669"/>
    <property type="project" value="InterPro"/>
</dbReference>
<dbReference type="CDD" id="cd10234">
    <property type="entry name" value="ASKHA_NBD_HSP70_DnaK-like"/>
    <property type="match status" value="1"/>
</dbReference>
<dbReference type="FunFam" id="2.60.34.10:FF:000014">
    <property type="entry name" value="Chaperone protein DnaK HSP70"/>
    <property type="match status" value="1"/>
</dbReference>
<dbReference type="FunFam" id="3.30.30.30:FF:000005">
    <property type="entry name" value="Heat shock protein ssb1"/>
    <property type="match status" value="1"/>
</dbReference>
<dbReference type="FunFam" id="1.20.1270.10:FF:000001">
    <property type="entry name" value="Molecular chaperone DnaK"/>
    <property type="match status" value="1"/>
</dbReference>
<dbReference type="FunFam" id="3.30.420.40:FF:000004">
    <property type="entry name" value="Molecular chaperone DnaK"/>
    <property type="match status" value="1"/>
</dbReference>
<dbReference type="FunFam" id="3.90.640.10:FF:000003">
    <property type="entry name" value="Molecular chaperone DnaK"/>
    <property type="match status" value="1"/>
</dbReference>
<dbReference type="Gene3D" id="1.20.1270.10">
    <property type="match status" value="1"/>
</dbReference>
<dbReference type="Gene3D" id="3.30.420.40">
    <property type="match status" value="2"/>
</dbReference>
<dbReference type="Gene3D" id="3.90.640.10">
    <property type="entry name" value="Actin, Chain A, domain 4"/>
    <property type="match status" value="1"/>
</dbReference>
<dbReference type="Gene3D" id="2.60.34.10">
    <property type="entry name" value="Substrate Binding Domain Of DNAk, Chain A, domain 1"/>
    <property type="match status" value="1"/>
</dbReference>
<dbReference type="HAMAP" id="MF_00332">
    <property type="entry name" value="DnaK"/>
    <property type="match status" value="1"/>
</dbReference>
<dbReference type="InterPro" id="IPR043129">
    <property type="entry name" value="ATPase_NBD"/>
</dbReference>
<dbReference type="InterPro" id="IPR012725">
    <property type="entry name" value="Chaperone_DnaK"/>
</dbReference>
<dbReference type="InterPro" id="IPR018181">
    <property type="entry name" value="Heat_shock_70_CS"/>
</dbReference>
<dbReference type="InterPro" id="IPR029048">
    <property type="entry name" value="HSP70_C_sf"/>
</dbReference>
<dbReference type="InterPro" id="IPR029047">
    <property type="entry name" value="HSP70_peptide-bd_sf"/>
</dbReference>
<dbReference type="InterPro" id="IPR013126">
    <property type="entry name" value="Hsp_70_fam"/>
</dbReference>
<dbReference type="NCBIfam" id="NF001413">
    <property type="entry name" value="PRK00290.1"/>
    <property type="match status" value="1"/>
</dbReference>
<dbReference type="NCBIfam" id="NF003520">
    <property type="entry name" value="PRK05183.1"/>
    <property type="match status" value="1"/>
</dbReference>
<dbReference type="NCBIfam" id="TIGR02350">
    <property type="entry name" value="prok_dnaK"/>
    <property type="match status" value="1"/>
</dbReference>
<dbReference type="PANTHER" id="PTHR19375">
    <property type="entry name" value="HEAT SHOCK PROTEIN 70KDA"/>
    <property type="match status" value="1"/>
</dbReference>
<dbReference type="Pfam" id="PF00012">
    <property type="entry name" value="HSP70"/>
    <property type="match status" value="1"/>
</dbReference>
<dbReference type="PRINTS" id="PR00301">
    <property type="entry name" value="HEATSHOCK70"/>
</dbReference>
<dbReference type="SUPFAM" id="SSF53067">
    <property type="entry name" value="Actin-like ATPase domain"/>
    <property type="match status" value="2"/>
</dbReference>
<dbReference type="SUPFAM" id="SSF100934">
    <property type="entry name" value="Heat shock protein 70kD (HSP70), C-terminal subdomain"/>
    <property type="match status" value="1"/>
</dbReference>
<dbReference type="SUPFAM" id="SSF100920">
    <property type="entry name" value="Heat shock protein 70kD (HSP70), peptide-binding domain"/>
    <property type="match status" value="1"/>
</dbReference>
<dbReference type="PROSITE" id="PS00297">
    <property type="entry name" value="HSP70_1"/>
    <property type="match status" value="1"/>
</dbReference>
<dbReference type="PROSITE" id="PS00329">
    <property type="entry name" value="HSP70_2"/>
    <property type="match status" value="1"/>
</dbReference>
<dbReference type="PROSITE" id="PS01036">
    <property type="entry name" value="HSP70_3"/>
    <property type="match status" value="1"/>
</dbReference>